<evidence type="ECO:0000255" key="1">
    <source>
        <dbReference type="HAMAP-Rule" id="MF_01342"/>
    </source>
</evidence>
<evidence type="ECO:0000305" key="2"/>
<proteinExistence type="inferred from homology"/>
<protein>
    <recommendedName>
        <fullName evidence="1">Large ribosomal subunit protein uL16</fullName>
    </recommendedName>
    <alternativeName>
        <fullName evidence="2">50S ribosomal protein L16</fullName>
    </alternativeName>
</protein>
<dbReference type="EMBL" id="CP001393">
    <property type="protein sequence ID" value="ACM60832.1"/>
    <property type="molecule type" value="Genomic_DNA"/>
</dbReference>
<dbReference type="RefSeq" id="WP_013402927.1">
    <property type="nucleotide sequence ID" value="NC_012034.1"/>
</dbReference>
<dbReference type="SMR" id="B9MKH4"/>
<dbReference type="STRING" id="521460.Athe_1738"/>
<dbReference type="GeneID" id="31773095"/>
<dbReference type="KEGG" id="ate:Athe_1738"/>
<dbReference type="eggNOG" id="COG0197">
    <property type="taxonomic scope" value="Bacteria"/>
</dbReference>
<dbReference type="HOGENOM" id="CLU_078858_2_1_9"/>
<dbReference type="Proteomes" id="UP000007723">
    <property type="component" value="Chromosome"/>
</dbReference>
<dbReference type="GO" id="GO:0022625">
    <property type="term" value="C:cytosolic large ribosomal subunit"/>
    <property type="evidence" value="ECO:0007669"/>
    <property type="project" value="TreeGrafter"/>
</dbReference>
<dbReference type="GO" id="GO:0019843">
    <property type="term" value="F:rRNA binding"/>
    <property type="evidence" value="ECO:0007669"/>
    <property type="project" value="UniProtKB-UniRule"/>
</dbReference>
<dbReference type="GO" id="GO:0003735">
    <property type="term" value="F:structural constituent of ribosome"/>
    <property type="evidence" value="ECO:0007669"/>
    <property type="project" value="InterPro"/>
</dbReference>
<dbReference type="GO" id="GO:0000049">
    <property type="term" value="F:tRNA binding"/>
    <property type="evidence" value="ECO:0007669"/>
    <property type="project" value="UniProtKB-KW"/>
</dbReference>
<dbReference type="GO" id="GO:0006412">
    <property type="term" value="P:translation"/>
    <property type="evidence" value="ECO:0007669"/>
    <property type="project" value="UniProtKB-UniRule"/>
</dbReference>
<dbReference type="CDD" id="cd01433">
    <property type="entry name" value="Ribosomal_L16_L10e"/>
    <property type="match status" value="1"/>
</dbReference>
<dbReference type="FunFam" id="3.90.1170.10:FF:000001">
    <property type="entry name" value="50S ribosomal protein L16"/>
    <property type="match status" value="1"/>
</dbReference>
<dbReference type="Gene3D" id="3.90.1170.10">
    <property type="entry name" value="Ribosomal protein L10e/L16"/>
    <property type="match status" value="1"/>
</dbReference>
<dbReference type="HAMAP" id="MF_01342">
    <property type="entry name" value="Ribosomal_uL16"/>
    <property type="match status" value="1"/>
</dbReference>
<dbReference type="InterPro" id="IPR047873">
    <property type="entry name" value="Ribosomal_uL16"/>
</dbReference>
<dbReference type="InterPro" id="IPR000114">
    <property type="entry name" value="Ribosomal_uL16_bact-type"/>
</dbReference>
<dbReference type="InterPro" id="IPR020798">
    <property type="entry name" value="Ribosomal_uL16_CS"/>
</dbReference>
<dbReference type="InterPro" id="IPR016180">
    <property type="entry name" value="Ribosomal_uL16_dom"/>
</dbReference>
<dbReference type="InterPro" id="IPR036920">
    <property type="entry name" value="Ribosomal_uL16_sf"/>
</dbReference>
<dbReference type="NCBIfam" id="TIGR01164">
    <property type="entry name" value="rplP_bact"/>
    <property type="match status" value="1"/>
</dbReference>
<dbReference type="PANTHER" id="PTHR12220">
    <property type="entry name" value="50S/60S RIBOSOMAL PROTEIN L16"/>
    <property type="match status" value="1"/>
</dbReference>
<dbReference type="PANTHER" id="PTHR12220:SF13">
    <property type="entry name" value="LARGE RIBOSOMAL SUBUNIT PROTEIN UL16M"/>
    <property type="match status" value="1"/>
</dbReference>
<dbReference type="Pfam" id="PF00252">
    <property type="entry name" value="Ribosomal_L16"/>
    <property type="match status" value="1"/>
</dbReference>
<dbReference type="PRINTS" id="PR00060">
    <property type="entry name" value="RIBOSOMALL16"/>
</dbReference>
<dbReference type="SUPFAM" id="SSF54686">
    <property type="entry name" value="Ribosomal protein L16p/L10e"/>
    <property type="match status" value="1"/>
</dbReference>
<dbReference type="PROSITE" id="PS00586">
    <property type="entry name" value="RIBOSOMAL_L16_1"/>
    <property type="match status" value="1"/>
</dbReference>
<dbReference type="PROSITE" id="PS00701">
    <property type="entry name" value="RIBOSOMAL_L16_2"/>
    <property type="match status" value="1"/>
</dbReference>
<keyword id="KW-0687">Ribonucleoprotein</keyword>
<keyword id="KW-0689">Ribosomal protein</keyword>
<keyword id="KW-0694">RNA-binding</keyword>
<keyword id="KW-0699">rRNA-binding</keyword>
<keyword id="KW-0820">tRNA-binding</keyword>
<name>RL16_CALBD</name>
<gene>
    <name evidence="1" type="primary">rplP</name>
    <name type="ordered locus">Athe_1738</name>
</gene>
<reference key="1">
    <citation type="submission" date="2009-01" db="EMBL/GenBank/DDBJ databases">
        <title>Complete sequence of chromosome of Caldicellulosiruptor becscii DSM 6725.</title>
        <authorList>
            <person name="Lucas S."/>
            <person name="Copeland A."/>
            <person name="Lapidus A."/>
            <person name="Glavina del Rio T."/>
            <person name="Tice H."/>
            <person name="Bruce D."/>
            <person name="Goodwin L."/>
            <person name="Pitluck S."/>
            <person name="Sims D."/>
            <person name="Meincke L."/>
            <person name="Brettin T."/>
            <person name="Detter J.C."/>
            <person name="Han C."/>
            <person name="Larimer F."/>
            <person name="Land M."/>
            <person name="Hauser L."/>
            <person name="Kyrpides N."/>
            <person name="Ovchinnikova G."/>
            <person name="Kataeva I."/>
            <person name="Adams M.W.W."/>
        </authorList>
    </citation>
    <scope>NUCLEOTIDE SEQUENCE [LARGE SCALE GENOMIC DNA]</scope>
    <source>
        <strain>ATCC BAA-1888 / DSM 6725 / KCTC 15123 / Z-1320</strain>
    </source>
</reference>
<sequence>MLMPKRVKWRKQQRGRMKGKATRGNFVAYGDFGIMALEPGWITSNQIEAARVAIARHIKRGGKVWIKIFPDKPVTRKPAETRMGSGKGSPEYWVAVVKPGRVMFEVGGVDEEVAKEALRLAIHKLPIKCKIVSREEAKVGGEANEGV</sequence>
<comment type="function">
    <text evidence="1">Binds 23S rRNA and is also seen to make contacts with the A and possibly P site tRNAs.</text>
</comment>
<comment type="subunit">
    <text evidence="1">Part of the 50S ribosomal subunit.</text>
</comment>
<comment type="similarity">
    <text evidence="1">Belongs to the universal ribosomal protein uL16 family.</text>
</comment>
<accession>B9MKH4</accession>
<organism>
    <name type="scientific">Caldicellulosiruptor bescii (strain ATCC BAA-1888 / DSM 6725 / KCTC 15123 / Z-1320)</name>
    <name type="common">Anaerocellum thermophilum</name>
    <dbReference type="NCBI Taxonomy" id="521460"/>
    <lineage>
        <taxon>Bacteria</taxon>
        <taxon>Bacillati</taxon>
        <taxon>Bacillota</taxon>
        <taxon>Bacillota incertae sedis</taxon>
        <taxon>Caldicellulosiruptorales</taxon>
        <taxon>Caldicellulosiruptoraceae</taxon>
        <taxon>Caldicellulosiruptor</taxon>
    </lineage>
</organism>
<feature type="chain" id="PRO_1000166331" description="Large ribosomal subunit protein uL16">
    <location>
        <begin position="1"/>
        <end position="147"/>
    </location>
</feature>